<proteinExistence type="inferred from homology"/>
<comment type="catalytic activity">
    <reaction evidence="1">
        <text>beta-D-fructose 1,6-bisphosphate + H2O = beta-D-fructose 6-phosphate + phosphate</text>
        <dbReference type="Rhea" id="RHEA:11064"/>
        <dbReference type="ChEBI" id="CHEBI:15377"/>
        <dbReference type="ChEBI" id="CHEBI:32966"/>
        <dbReference type="ChEBI" id="CHEBI:43474"/>
        <dbReference type="ChEBI" id="CHEBI:57634"/>
        <dbReference type="EC" id="3.1.3.11"/>
    </reaction>
</comment>
<comment type="cofactor">
    <cofactor evidence="1">
        <name>Mn(2+)</name>
        <dbReference type="ChEBI" id="CHEBI:29035"/>
    </cofactor>
</comment>
<comment type="pathway">
    <text evidence="1">Carbohydrate biosynthesis; gluconeogenesis.</text>
</comment>
<comment type="similarity">
    <text evidence="1">Belongs to the FBPase class 3 family.</text>
</comment>
<organism>
    <name type="scientific">Staphylococcus aureus (strain JH1)</name>
    <dbReference type="NCBI Taxonomy" id="359787"/>
    <lineage>
        <taxon>Bacteria</taxon>
        <taxon>Bacillati</taxon>
        <taxon>Bacillota</taxon>
        <taxon>Bacilli</taxon>
        <taxon>Bacillales</taxon>
        <taxon>Staphylococcaceae</taxon>
        <taxon>Staphylococcus</taxon>
    </lineage>
</organism>
<evidence type="ECO:0000255" key="1">
    <source>
        <dbReference type="HAMAP-Rule" id="MF_01854"/>
    </source>
</evidence>
<evidence type="ECO:0000256" key="2">
    <source>
        <dbReference type="SAM" id="MobiDB-lite"/>
    </source>
</evidence>
<keyword id="KW-0119">Carbohydrate metabolism</keyword>
<keyword id="KW-0378">Hydrolase</keyword>
<keyword id="KW-0464">Manganese</keyword>
<feature type="chain" id="PRO_0000359984" description="Fructose-1,6-bisphosphatase class 3">
    <location>
        <begin position="1"/>
        <end position="654"/>
    </location>
</feature>
<feature type="region of interest" description="Disordered" evidence="2">
    <location>
        <begin position="288"/>
        <end position="307"/>
    </location>
</feature>
<feature type="compositionally biased region" description="Basic and acidic residues" evidence="2">
    <location>
        <begin position="298"/>
        <end position="307"/>
    </location>
</feature>
<name>F16PC_STAA2</name>
<protein>
    <recommendedName>
        <fullName evidence="1">Fructose-1,6-bisphosphatase class 3</fullName>
        <shortName evidence="1">FBPase class 3</shortName>
        <ecNumber evidence="1">3.1.3.11</ecNumber>
    </recommendedName>
    <alternativeName>
        <fullName evidence="1">D-fructose-1,6-bisphosphate 1-phosphohydrolase class 3</fullName>
    </alternativeName>
</protein>
<accession>A6U4P6</accession>
<gene>
    <name evidence="1" type="primary">fbp</name>
    <name type="ordered locus">SaurJH1_2591</name>
</gene>
<reference key="1">
    <citation type="submission" date="2007-06" db="EMBL/GenBank/DDBJ databases">
        <title>Complete sequence of chromosome of Staphylococcus aureus subsp. aureus JH1.</title>
        <authorList>
            <consortium name="US DOE Joint Genome Institute"/>
            <person name="Copeland A."/>
            <person name="Lucas S."/>
            <person name="Lapidus A."/>
            <person name="Barry K."/>
            <person name="Detter J.C."/>
            <person name="Glavina del Rio T."/>
            <person name="Hammon N."/>
            <person name="Israni S."/>
            <person name="Dalin E."/>
            <person name="Tice H."/>
            <person name="Pitluck S."/>
            <person name="Chain P."/>
            <person name="Malfatti S."/>
            <person name="Shin M."/>
            <person name="Vergez L."/>
            <person name="Schmutz J."/>
            <person name="Larimer F."/>
            <person name="Land M."/>
            <person name="Hauser L."/>
            <person name="Kyrpides N."/>
            <person name="Ivanova N."/>
            <person name="Tomasz A."/>
            <person name="Richardson P."/>
        </authorList>
    </citation>
    <scope>NUCLEOTIDE SEQUENCE [LARGE SCALE GENOMIC DNA]</scope>
    <source>
        <strain>JH1</strain>
    </source>
</reference>
<sequence>MTQITEKELKKKYLDLLSQNFDTPEKLATEIINLESILELPKGTEHFVSDLHGEYEAFQHVLRNGSGNVRAKINDIFKERLSTKELNDLTALVYYPEDKLKLIKSDFQSCGQLNVWYITTIEHLIELIKYCSSKYTRSKLRKALPKQYVYIIEELLYKSNEYQNKKSYYETLVNQVIELKQADDLIIGLAYSVQRLVVDHLHVVGDIYDRGPQPDKIMDTLINYHSLDIQWGNHDVLWVGAYAGSKVCLANLLRICARYDNLDIIEDAYGINLRPLLTLAEKYYDADNPAFKPKKRPDKHERLTQREESQITKIHQAIAMIQFKLEIPIIKRRPNFEMEERLVLEKVNYDTNEITVYGNTYPLKDTCFQTINRNNPAELLPEEEEVMNKLLLSFQQSEKLRRHMSFLMRKGSLYLPYNGNLLIHGCIPVDENGEMESFEIDGHTYSGQELLDVFEYHVRKSFDEKENTDDLSTDLVWYLWTGKYSSLFGKRAMTTFERYFIADKASHKEEKNPYYHLREDVNMVRKMLSDFGLNPDEGRIINGHTPVKEINGEDPIKADGKMLVIDGGFSKAYQSTTGIAGYTLLYNSFGMQLVAHQQFNAKEKILSEGIDELSIKRVVDKELQRKKIRDTNIGKELQAQIDILKMLMHDRYLD</sequence>
<dbReference type="EC" id="3.1.3.11" evidence="1"/>
<dbReference type="EMBL" id="CP000736">
    <property type="protein sequence ID" value="ABR53414.1"/>
    <property type="molecule type" value="Genomic_DNA"/>
</dbReference>
<dbReference type="KEGG" id="sah:SaurJH1_2591"/>
<dbReference type="HOGENOM" id="CLU_028392_2_0_9"/>
<dbReference type="UniPathway" id="UPA00138"/>
<dbReference type="GO" id="GO:0042132">
    <property type="term" value="F:fructose 1,6-bisphosphate 1-phosphatase activity"/>
    <property type="evidence" value="ECO:0007669"/>
    <property type="project" value="UniProtKB-UniRule"/>
</dbReference>
<dbReference type="GO" id="GO:0006094">
    <property type="term" value="P:gluconeogenesis"/>
    <property type="evidence" value="ECO:0007669"/>
    <property type="project" value="UniProtKB-UniRule"/>
</dbReference>
<dbReference type="Gene3D" id="3.60.21.10">
    <property type="match status" value="1"/>
</dbReference>
<dbReference type="HAMAP" id="MF_01854">
    <property type="entry name" value="FBPase_class3"/>
    <property type="match status" value="1"/>
</dbReference>
<dbReference type="InterPro" id="IPR009164">
    <property type="entry name" value="FBPtase_class3"/>
</dbReference>
<dbReference type="InterPro" id="IPR029052">
    <property type="entry name" value="Metallo-depent_PP-like"/>
</dbReference>
<dbReference type="Pfam" id="PF06874">
    <property type="entry name" value="FBPase_2"/>
    <property type="match status" value="1"/>
</dbReference>
<dbReference type="PIRSF" id="PIRSF000906">
    <property type="entry name" value="FBPtase_Bacill"/>
    <property type="match status" value="1"/>
</dbReference>
<dbReference type="SUPFAM" id="SSF56300">
    <property type="entry name" value="Metallo-dependent phosphatases"/>
    <property type="match status" value="2"/>
</dbReference>